<reference key="1">
    <citation type="submission" date="2007-09" db="EMBL/GenBank/DDBJ databases">
        <authorList>
            <consortium name="NIH - Xenopus Gene Collection (XGC) project"/>
        </authorList>
    </citation>
    <scope>NUCLEOTIDE SEQUENCE [LARGE SCALE MRNA]</scope>
    <source>
        <tissue>Intestine</tissue>
    </source>
</reference>
<sequence length="305" mass="34060">MKVYFVFLCLLPSLISGASILPEPRKDVRASASNAEIQSLAEQFYAADTNKAASGDITLNLQYKASSTQTSSGTDFASQKLFNYVNEAKLFARPTFARLVDLLDNYVHTTGTAESVPTAEVNEQNAFIDEIFKTSIITKLSDFFISKGYYSSAASFKTDLKEMWFGLYTRTSGPLDSSGFEHVFHGEIHKGKISGLHNWVRLYLLEKSGQVNYLSYSSDGVWNGYPDIYAFQLKWSTYLKTLGSFFIGSSPEFDIAMYTLCYVTRPDSLCSVKMGGSIFQIQTYTWANSTYGNGKRYVASSYPNI</sequence>
<proteinExistence type="evidence at transcript level"/>
<organism>
    <name type="scientific">Xenopus laevis</name>
    <name type="common">African clawed frog</name>
    <dbReference type="NCBI Taxonomy" id="8355"/>
    <lineage>
        <taxon>Eukaryota</taxon>
        <taxon>Metazoa</taxon>
        <taxon>Chordata</taxon>
        <taxon>Craniata</taxon>
        <taxon>Vertebrata</taxon>
        <taxon>Euteleostomi</taxon>
        <taxon>Amphibia</taxon>
        <taxon>Batrachia</taxon>
        <taxon>Anura</taxon>
        <taxon>Pipoidea</taxon>
        <taxon>Pipidae</taxon>
        <taxon>Xenopodinae</taxon>
        <taxon>Xenopus</taxon>
        <taxon>Xenopus</taxon>
    </lineage>
</organism>
<dbReference type="EC" id="4.6.1.-" evidence="2"/>
<dbReference type="EMBL" id="BC153814">
    <property type="protein sequence ID" value="AAI53815.1"/>
    <property type="molecule type" value="mRNA"/>
</dbReference>
<dbReference type="RefSeq" id="NP_001104223.1">
    <property type="nucleotide sequence ID" value="NM_001110753.1"/>
</dbReference>
<dbReference type="SMR" id="A8E627"/>
<dbReference type="GlyCosmos" id="A8E627">
    <property type="glycosylation" value="1 site, No reported glycans"/>
</dbReference>
<dbReference type="GeneID" id="100126655"/>
<dbReference type="KEGG" id="xla:100126655"/>
<dbReference type="AGR" id="Xenbase:XB-GENE-5929438"/>
<dbReference type="CTD" id="100126655"/>
<dbReference type="Xenbase" id="XB-GENE-5929438">
    <property type="gene designation" value="endoul2.S"/>
</dbReference>
<dbReference type="OrthoDB" id="430326at2759"/>
<dbReference type="Proteomes" id="UP000186698">
    <property type="component" value="Chromosome 2S"/>
</dbReference>
<dbReference type="Bgee" id="100126655">
    <property type="expression patterns" value="Expressed in pancreas and 14 other cell types or tissues"/>
</dbReference>
<dbReference type="GO" id="GO:0005576">
    <property type="term" value="C:extracellular region"/>
    <property type="evidence" value="ECO:0007669"/>
    <property type="project" value="UniProtKB-SubCell"/>
</dbReference>
<dbReference type="GO" id="GO:0016829">
    <property type="term" value="F:lyase activity"/>
    <property type="evidence" value="ECO:0007669"/>
    <property type="project" value="UniProtKB-KW"/>
</dbReference>
<dbReference type="GO" id="GO:0046872">
    <property type="term" value="F:metal ion binding"/>
    <property type="evidence" value="ECO:0007669"/>
    <property type="project" value="UniProtKB-KW"/>
</dbReference>
<dbReference type="GO" id="GO:0003723">
    <property type="term" value="F:RNA binding"/>
    <property type="evidence" value="ECO:0000250"/>
    <property type="project" value="UniProtKB"/>
</dbReference>
<dbReference type="GO" id="GO:0004521">
    <property type="term" value="F:RNA endonuclease activity"/>
    <property type="evidence" value="ECO:0000250"/>
    <property type="project" value="UniProtKB"/>
</dbReference>
<dbReference type="CDD" id="cd21159">
    <property type="entry name" value="XendoU"/>
    <property type="match status" value="1"/>
</dbReference>
<dbReference type="InterPro" id="IPR039787">
    <property type="entry name" value="ENDOU"/>
</dbReference>
<dbReference type="InterPro" id="IPR037227">
    <property type="entry name" value="EndoU-like"/>
</dbReference>
<dbReference type="InterPro" id="IPR018998">
    <property type="entry name" value="EndoU_C"/>
</dbReference>
<dbReference type="PANTHER" id="PTHR12439">
    <property type="entry name" value="PLACENTAL PROTEIN 11-RELATED"/>
    <property type="match status" value="1"/>
</dbReference>
<dbReference type="PANTHER" id="PTHR12439:SF43">
    <property type="entry name" value="URIDYLATE-SPECIFIC ENDORIBONUCLEASE D"/>
    <property type="match status" value="1"/>
</dbReference>
<dbReference type="Pfam" id="PF09412">
    <property type="entry name" value="XendoU"/>
    <property type="match status" value="1"/>
</dbReference>
<dbReference type="SUPFAM" id="SSF142877">
    <property type="entry name" value="EndoU-like"/>
    <property type="match status" value="1"/>
</dbReference>
<dbReference type="PROSITE" id="PS51959">
    <property type="entry name" value="ENDOU"/>
    <property type="match status" value="1"/>
</dbReference>
<feature type="signal peptide" evidence="3">
    <location>
        <begin position="1"/>
        <end position="17"/>
    </location>
</feature>
<feature type="chain" id="PRO_0000394228" description="Uridylate-specific endoribonuclease D">
    <location>
        <begin position="18"/>
        <end position="305"/>
    </location>
</feature>
<feature type="domain" description="EndoU" evidence="4">
    <location>
        <begin position="33"/>
        <end position="305"/>
    </location>
</feature>
<feature type="active site" evidence="4">
    <location>
        <position position="182"/>
    </location>
</feature>
<feature type="active site" evidence="4">
    <location>
        <position position="197"/>
    </location>
</feature>
<feature type="active site" evidence="4">
    <location>
        <position position="240"/>
    </location>
</feature>
<feature type="glycosylation site" description="N-linked (GlcNAc...) asparagine" evidence="3">
    <location>
        <position position="288"/>
    </location>
</feature>
<gene>
    <name type="primary">endou-d</name>
</gene>
<accession>A8E627</accession>
<protein>
    <recommendedName>
        <fullName>Uridylate-specific endoribonuclease D</fullName>
        <ecNumber evidence="2">4.6.1.-</ecNumber>
    </recommendedName>
    <alternativeName>
        <fullName>Protein endoU-D</fullName>
    </alternativeName>
    <alternativeName>
        <fullName>XendoU-D</fullName>
    </alternativeName>
</protein>
<keyword id="KW-0255">Endonuclease</keyword>
<keyword id="KW-0325">Glycoprotein</keyword>
<keyword id="KW-0378">Hydrolase</keyword>
<keyword id="KW-0456">Lyase</keyword>
<keyword id="KW-0464">Manganese</keyword>
<keyword id="KW-0479">Metal-binding</keyword>
<keyword id="KW-0540">Nuclease</keyword>
<keyword id="KW-1185">Reference proteome</keyword>
<keyword id="KW-0694">RNA-binding</keyword>
<keyword id="KW-0964">Secreted</keyword>
<keyword id="KW-0732">Signal</keyword>
<name>ENDUD_XENLA</name>
<comment type="function">
    <text evidence="2">Endoribonuclease that cleaves single-stranded RNAs at 5' of uridylates and releases a product with a 2',3'-cyclic phosphate at the 3'-end.</text>
</comment>
<comment type="catalytic activity">
    <reaction evidence="2">
        <text>ribonucleotidyl-uridine-RNA = a 5'-end dephospho-uridine-RNA + a 3'-end 2',3'-cyclophospho-ribonucleotide-RNA</text>
        <dbReference type="Rhea" id="RHEA:67792"/>
        <dbReference type="Rhea" id="RHEA-COMP:10464"/>
        <dbReference type="Rhea" id="RHEA-COMP:17354"/>
        <dbReference type="Rhea" id="RHEA-COMP:17356"/>
        <dbReference type="ChEBI" id="CHEBI:83064"/>
        <dbReference type="ChEBI" id="CHEBI:173117"/>
        <dbReference type="ChEBI" id="CHEBI:173224"/>
    </reaction>
    <physiologicalReaction direction="left-to-right" evidence="2">
        <dbReference type="Rhea" id="RHEA:67793"/>
    </physiologicalReaction>
</comment>
<comment type="cofactor">
    <cofactor evidence="1">
        <name>Mn(2+)</name>
        <dbReference type="ChEBI" id="CHEBI:29035"/>
    </cofactor>
</comment>
<comment type="subunit">
    <text evidence="1">Monomer.</text>
</comment>
<comment type="subcellular location">
    <subcellularLocation>
        <location evidence="5">Secreted</location>
    </subcellularLocation>
</comment>
<comment type="similarity">
    <text evidence="5">Belongs to the ENDOU family.</text>
</comment>
<evidence type="ECO:0000250" key="1"/>
<evidence type="ECO:0000250" key="2">
    <source>
        <dbReference type="UniProtKB" id="P21128"/>
    </source>
</evidence>
<evidence type="ECO:0000255" key="3"/>
<evidence type="ECO:0000255" key="4">
    <source>
        <dbReference type="PROSITE-ProRule" id="PRU01304"/>
    </source>
</evidence>
<evidence type="ECO:0000305" key="5"/>